<comment type="function">
    <text evidence="1">Catalyzes the phosphorylation of the hydroxyl group of 4-methyl-5-beta-hydroxyethylthiazole (THZ).</text>
</comment>
<comment type="catalytic activity">
    <reaction evidence="1">
        <text>5-(2-hydroxyethyl)-4-methylthiazole + ATP = 4-methyl-5-(2-phosphooxyethyl)-thiazole + ADP + H(+)</text>
        <dbReference type="Rhea" id="RHEA:24212"/>
        <dbReference type="ChEBI" id="CHEBI:15378"/>
        <dbReference type="ChEBI" id="CHEBI:17957"/>
        <dbReference type="ChEBI" id="CHEBI:30616"/>
        <dbReference type="ChEBI" id="CHEBI:58296"/>
        <dbReference type="ChEBI" id="CHEBI:456216"/>
        <dbReference type="EC" id="2.7.1.50"/>
    </reaction>
</comment>
<comment type="cofactor">
    <cofactor evidence="1">
        <name>Mg(2+)</name>
        <dbReference type="ChEBI" id="CHEBI:18420"/>
    </cofactor>
</comment>
<comment type="pathway">
    <text evidence="1">Cofactor biosynthesis; thiamine diphosphate biosynthesis; 4-methyl-5-(2-phosphoethyl)-thiazole from 5-(2-hydroxyethyl)-4-methylthiazole: step 1/1.</text>
</comment>
<comment type="similarity">
    <text evidence="1">Belongs to the Thz kinase family.</text>
</comment>
<protein>
    <recommendedName>
        <fullName evidence="1">Hydroxyethylthiazole kinase</fullName>
        <ecNumber evidence="1">2.7.1.50</ecNumber>
    </recommendedName>
    <alternativeName>
        <fullName evidence="1">4-methyl-5-beta-hydroxyethylthiazole kinase</fullName>
        <shortName evidence="1">TH kinase</shortName>
        <shortName evidence="1">Thz kinase</shortName>
    </alternativeName>
</protein>
<reference key="1">
    <citation type="journal article" date="2012" name="BMC Microbiol.">
        <title>Genome sequence of Desulfitobacterium hafniense DCB-2, a Gram-positive anaerobe capable of dehalogenation and metal reduction.</title>
        <authorList>
            <person name="Kim S.H."/>
            <person name="Harzman C."/>
            <person name="Davis J.K."/>
            <person name="Hutcheson R."/>
            <person name="Broderick J.B."/>
            <person name="Marsh T.L."/>
            <person name="Tiedje J.M."/>
        </authorList>
    </citation>
    <scope>NUCLEOTIDE SEQUENCE [LARGE SCALE GENOMIC DNA]</scope>
    <source>
        <strain>DSM 10664 / DCB-2</strain>
    </source>
</reference>
<accession>B8FUD3</accession>
<proteinExistence type="inferred from homology"/>
<keyword id="KW-0067">ATP-binding</keyword>
<keyword id="KW-0418">Kinase</keyword>
<keyword id="KW-0460">Magnesium</keyword>
<keyword id="KW-0479">Metal-binding</keyword>
<keyword id="KW-0547">Nucleotide-binding</keyword>
<keyword id="KW-0784">Thiamine biosynthesis</keyword>
<keyword id="KW-0808">Transferase</keyword>
<sequence length="267" mass="27844">MKEKLTKALQALKHKTPLVHAITNVVTVNDCANSLLAVGASPAMCEAADEVFEFSQLAGSLYLNLGTLTKEQEMAAYLAIRGATLKGIPVILDPVACGAIPRKKATIERLGHFGRFTVIKGNLGEVKALAGLAARVRGVDSLDEGNDGLEACQSLARAYGCVVAATGKVDIVADGQRACLIENGTEMLTRITGAGCMAGALVAGFCGAYEDAFGATVAALLTMSLAGELAQETSGGELPGTFRAHLIDQLSLVDEALIEKRGRVQWL</sequence>
<feature type="chain" id="PRO_1000198116" description="Hydroxyethylthiazole kinase">
    <location>
        <begin position="1"/>
        <end position="267"/>
    </location>
</feature>
<feature type="binding site" evidence="1">
    <location>
        <position position="44"/>
    </location>
    <ligand>
        <name>substrate</name>
    </ligand>
</feature>
<feature type="binding site" evidence="1">
    <location>
        <position position="120"/>
    </location>
    <ligand>
        <name>ATP</name>
        <dbReference type="ChEBI" id="CHEBI:30616"/>
    </ligand>
</feature>
<feature type="binding site" evidence="1">
    <location>
        <position position="166"/>
    </location>
    <ligand>
        <name>ATP</name>
        <dbReference type="ChEBI" id="CHEBI:30616"/>
    </ligand>
</feature>
<feature type="binding site" evidence="1">
    <location>
        <position position="193"/>
    </location>
    <ligand>
        <name>substrate</name>
    </ligand>
</feature>
<dbReference type="EC" id="2.7.1.50" evidence="1"/>
<dbReference type="EMBL" id="CP001336">
    <property type="protein sequence ID" value="ACL20547.1"/>
    <property type="molecule type" value="Genomic_DNA"/>
</dbReference>
<dbReference type="RefSeq" id="WP_005816651.1">
    <property type="nucleotide sequence ID" value="NC_011830.1"/>
</dbReference>
<dbReference type="SMR" id="B8FUD3"/>
<dbReference type="KEGG" id="dhd:Dhaf_2519"/>
<dbReference type="HOGENOM" id="CLU_019943_0_0_9"/>
<dbReference type="UniPathway" id="UPA00060">
    <property type="reaction ID" value="UER00139"/>
</dbReference>
<dbReference type="Proteomes" id="UP000007726">
    <property type="component" value="Chromosome"/>
</dbReference>
<dbReference type="GO" id="GO:0005524">
    <property type="term" value="F:ATP binding"/>
    <property type="evidence" value="ECO:0007669"/>
    <property type="project" value="UniProtKB-UniRule"/>
</dbReference>
<dbReference type="GO" id="GO:0004417">
    <property type="term" value="F:hydroxyethylthiazole kinase activity"/>
    <property type="evidence" value="ECO:0007669"/>
    <property type="project" value="UniProtKB-UniRule"/>
</dbReference>
<dbReference type="GO" id="GO:0000287">
    <property type="term" value="F:magnesium ion binding"/>
    <property type="evidence" value="ECO:0007669"/>
    <property type="project" value="UniProtKB-UniRule"/>
</dbReference>
<dbReference type="GO" id="GO:0009228">
    <property type="term" value="P:thiamine biosynthetic process"/>
    <property type="evidence" value="ECO:0007669"/>
    <property type="project" value="UniProtKB-KW"/>
</dbReference>
<dbReference type="GO" id="GO:0009229">
    <property type="term" value="P:thiamine diphosphate biosynthetic process"/>
    <property type="evidence" value="ECO:0007669"/>
    <property type="project" value="UniProtKB-UniRule"/>
</dbReference>
<dbReference type="CDD" id="cd01170">
    <property type="entry name" value="THZ_kinase"/>
    <property type="match status" value="1"/>
</dbReference>
<dbReference type="Gene3D" id="3.40.1190.20">
    <property type="match status" value="1"/>
</dbReference>
<dbReference type="HAMAP" id="MF_00228">
    <property type="entry name" value="Thz_kinase"/>
    <property type="match status" value="1"/>
</dbReference>
<dbReference type="InterPro" id="IPR000417">
    <property type="entry name" value="Hyethyz_kinase"/>
</dbReference>
<dbReference type="InterPro" id="IPR029056">
    <property type="entry name" value="Ribokinase-like"/>
</dbReference>
<dbReference type="NCBIfam" id="NF006830">
    <property type="entry name" value="PRK09355.1"/>
    <property type="match status" value="1"/>
</dbReference>
<dbReference type="NCBIfam" id="TIGR00694">
    <property type="entry name" value="thiM"/>
    <property type="match status" value="1"/>
</dbReference>
<dbReference type="Pfam" id="PF02110">
    <property type="entry name" value="HK"/>
    <property type="match status" value="1"/>
</dbReference>
<dbReference type="PIRSF" id="PIRSF000513">
    <property type="entry name" value="Thz_kinase"/>
    <property type="match status" value="1"/>
</dbReference>
<dbReference type="PRINTS" id="PR01099">
    <property type="entry name" value="HYETHTZKNASE"/>
</dbReference>
<dbReference type="SUPFAM" id="SSF53613">
    <property type="entry name" value="Ribokinase-like"/>
    <property type="match status" value="1"/>
</dbReference>
<evidence type="ECO:0000255" key="1">
    <source>
        <dbReference type="HAMAP-Rule" id="MF_00228"/>
    </source>
</evidence>
<name>THIM_DESHD</name>
<gene>
    <name evidence="1" type="primary">thiM</name>
    <name type="ordered locus">Dhaf_2519</name>
</gene>
<organism>
    <name type="scientific">Desulfitobacterium hafniense (strain DSM 10664 / DCB-2)</name>
    <dbReference type="NCBI Taxonomy" id="272564"/>
    <lineage>
        <taxon>Bacteria</taxon>
        <taxon>Bacillati</taxon>
        <taxon>Bacillota</taxon>
        <taxon>Clostridia</taxon>
        <taxon>Eubacteriales</taxon>
        <taxon>Desulfitobacteriaceae</taxon>
        <taxon>Desulfitobacterium</taxon>
    </lineage>
</organism>